<protein>
    <recommendedName>
        <fullName evidence="1">Small ribosomal subunit protein uS8</fullName>
    </recommendedName>
    <alternativeName>
        <fullName evidence="2">30S ribosomal protein S8</fullName>
    </alternativeName>
</protein>
<evidence type="ECO:0000255" key="1">
    <source>
        <dbReference type="HAMAP-Rule" id="MF_01302"/>
    </source>
</evidence>
<evidence type="ECO:0000305" key="2"/>
<sequence>MTTDVIADMLTRIRNANQRYLKTVSVPSSKVKLEIARILKEEGFISDFTVEGDVKKTINIELKYQGKTRVIQGLKKISKPGLRVYAQANEIPQVLNGLGISIVSTSQGIMTGKKARLANAGGEVLAFIW</sequence>
<organism>
    <name type="scientific">Mycoplasma capricolum subsp. capricolum (strain California kid / ATCC 27343 / NCTC 10154)</name>
    <dbReference type="NCBI Taxonomy" id="340047"/>
    <lineage>
        <taxon>Bacteria</taxon>
        <taxon>Bacillati</taxon>
        <taxon>Mycoplasmatota</taxon>
        <taxon>Mollicutes</taxon>
        <taxon>Mycoplasmataceae</taxon>
        <taxon>Mycoplasma</taxon>
    </lineage>
</organism>
<gene>
    <name evidence="1" type="primary">rpsH</name>
    <name type="ordered locus">MCAP_0682</name>
</gene>
<feature type="chain" id="PRO_0000126437" description="Small ribosomal subunit protein uS8">
    <location>
        <begin position="1"/>
        <end position="129"/>
    </location>
</feature>
<name>RS8_MYCCT</name>
<keyword id="KW-0687">Ribonucleoprotein</keyword>
<keyword id="KW-0689">Ribosomal protein</keyword>
<keyword id="KW-0694">RNA-binding</keyword>
<keyword id="KW-0699">rRNA-binding</keyword>
<dbReference type="EMBL" id="X06414">
    <property type="protein sequence ID" value="CAA29718.1"/>
    <property type="molecule type" value="Genomic_DNA"/>
</dbReference>
<dbReference type="EMBL" id="X01121">
    <property type="protein sequence ID" value="CAA25590.1"/>
    <property type="molecule type" value="Genomic_DNA"/>
</dbReference>
<dbReference type="EMBL" id="CP000123">
    <property type="protein sequence ID" value="ABC01650.1"/>
    <property type="molecule type" value="Genomic_DNA"/>
</dbReference>
<dbReference type="PIR" id="S02845">
    <property type="entry name" value="R3YM8"/>
</dbReference>
<dbReference type="RefSeq" id="WP_008362508.1">
    <property type="nucleotide sequence ID" value="NC_007633.1"/>
</dbReference>
<dbReference type="SMR" id="P04446"/>
<dbReference type="GeneID" id="90598061"/>
<dbReference type="KEGG" id="mcp:MCAP_0682"/>
<dbReference type="HOGENOM" id="CLU_098428_0_2_14"/>
<dbReference type="PhylomeDB" id="P04446"/>
<dbReference type="Proteomes" id="UP000001928">
    <property type="component" value="Chromosome"/>
</dbReference>
<dbReference type="GO" id="GO:1990904">
    <property type="term" value="C:ribonucleoprotein complex"/>
    <property type="evidence" value="ECO:0007669"/>
    <property type="project" value="UniProtKB-KW"/>
</dbReference>
<dbReference type="GO" id="GO:0005840">
    <property type="term" value="C:ribosome"/>
    <property type="evidence" value="ECO:0007669"/>
    <property type="project" value="UniProtKB-KW"/>
</dbReference>
<dbReference type="GO" id="GO:0019843">
    <property type="term" value="F:rRNA binding"/>
    <property type="evidence" value="ECO:0007669"/>
    <property type="project" value="UniProtKB-UniRule"/>
</dbReference>
<dbReference type="GO" id="GO:0003735">
    <property type="term" value="F:structural constituent of ribosome"/>
    <property type="evidence" value="ECO:0007669"/>
    <property type="project" value="InterPro"/>
</dbReference>
<dbReference type="GO" id="GO:0006412">
    <property type="term" value="P:translation"/>
    <property type="evidence" value="ECO:0007669"/>
    <property type="project" value="UniProtKB-UniRule"/>
</dbReference>
<dbReference type="FunFam" id="3.30.1370.30:FF:000002">
    <property type="entry name" value="30S ribosomal protein S8"/>
    <property type="match status" value="1"/>
</dbReference>
<dbReference type="FunFam" id="3.30.1490.10:FF:000001">
    <property type="entry name" value="30S ribosomal protein S8"/>
    <property type="match status" value="1"/>
</dbReference>
<dbReference type="Gene3D" id="3.30.1370.30">
    <property type="match status" value="1"/>
</dbReference>
<dbReference type="Gene3D" id="3.30.1490.10">
    <property type="match status" value="1"/>
</dbReference>
<dbReference type="HAMAP" id="MF_01302_B">
    <property type="entry name" value="Ribosomal_uS8_B"/>
    <property type="match status" value="1"/>
</dbReference>
<dbReference type="InterPro" id="IPR000630">
    <property type="entry name" value="Ribosomal_uS8"/>
</dbReference>
<dbReference type="InterPro" id="IPR047863">
    <property type="entry name" value="Ribosomal_uS8_CS"/>
</dbReference>
<dbReference type="InterPro" id="IPR035987">
    <property type="entry name" value="Ribosomal_uS8_sf"/>
</dbReference>
<dbReference type="NCBIfam" id="NF001109">
    <property type="entry name" value="PRK00136.1"/>
    <property type="match status" value="1"/>
</dbReference>
<dbReference type="PANTHER" id="PTHR11758">
    <property type="entry name" value="40S RIBOSOMAL PROTEIN S15A"/>
    <property type="match status" value="1"/>
</dbReference>
<dbReference type="Pfam" id="PF00410">
    <property type="entry name" value="Ribosomal_S8"/>
    <property type="match status" value="1"/>
</dbReference>
<dbReference type="SUPFAM" id="SSF56047">
    <property type="entry name" value="Ribosomal protein S8"/>
    <property type="match status" value="1"/>
</dbReference>
<dbReference type="PROSITE" id="PS00053">
    <property type="entry name" value="RIBOSOMAL_S8"/>
    <property type="match status" value="1"/>
</dbReference>
<comment type="function">
    <text evidence="1">One of the primary rRNA binding proteins, it binds directly to 16S rRNA central domain where it helps coordinate assembly of the platform of the 30S subunit.</text>
</comment>
<comment type="subunit">
    <text evidence="1">Part of the 30S ribosomal subunit. Contacts proteins S5 and S12.</text>
</comment>
<comment type="similarity">
    <text evidence="1">Belongs to the universal ribosomal protein uS8 family.</text>
</comment>
<accession>P04446</accession>
<accession>Q2SRG7</accession>
<reference key="1">
    <citation type="journal article" date="1987" name="Mol. Gen. Genet.">
        <title>The ribosomal protein gene cluster of Mycoplasma capricolum.</title>
        <authorList>
            <person name="Ohkubo S."/>
            <person name="Muto A."/>
            <person name="Kawauchi Y."/>
            <person name="Yamao F."/>
            <person name="Osawa S."/>
        </authorList>
    </citation>
    <scope>NUCLEOTIDE SEQUENCE [GENOMIC DNA]</scope>
</reference>
<reference key="2">
    <citation type="journal article" date="1984" name="Nucleic Acids Res.">
        <title>Preferential use of A- and U-rich codons for Mycoplasma capricolum ribosomal proteins S8 and L6.</title>
        <authorList>
            <person name="Muto A."/>
            <person name="Kawauchi Y."/>
            <person name="Yamao F."/>
            <person name="Osawa S."/>
        </authorList>
    </citation>
    <scope>NUCLEOTIDE SEQUENCE [GENOMIC DNA]</scope>
</reference>
<reference key="3">
    <citation type="submission" date="2005-09" db="EMBL/GenBank/DDBJ databases">
        <authorList>
            <person name="Glass J.I."/>
            <person name="Lartigue C."/>
            <person name="Pfannkoch C."/>
            <person name="Baden-Tillson H."/>
            <person name="Smith H.O."/>
            <person name="Venter J.C."/>
            <person name="Roske K."/>
            <person name="Wise K.S."/>
            <person name="Calcutt M.J."/>
            <person name="Nelson W.C."/>
            <person name="Nierman W.C."/>
        </authorList>
    </citation>
    <scope>NUCLEOTIDE SEQUENCE [LARGE SCALE GENOMIC DNA]</scope>
    <source>
        <strain>California kid / ATCC 27343 / NCTC 10154</strain>
    </source>
</reference>
<proteinExistence type="inferred from homology"/>